<name>OSTF1_BOVIN</name>
<protein>
    <recommendedName>
        <fullName>Osteoclast-stimulating factor 1</fullName>
    </recommendedName>
</protein>
<accession>Q8MJ50</accession>
<proteinExistence type="evidence at transcript level"/>
<feature type="initiator methionine" description="Removed" evidence="2">
    <location>
        <position position="1"/>
    </location>
</feature>
<feature type="chain" id="PRO_0000238954" description="Osteoclast-stimulating factor 1">
    <location>
        <begin position="2"/>
        <end position="214"/>
    </location>
</feature>
<feature type="domain" description="SH3" evidence="3">
    <location>
        <begin position="12"/>
        <end position="71"/>
    </location>
</feature>
<feature type="repeat" description="ANK 1">
    <location>
        <begin position="72"/>
        <end position="101"/>
    </location>
</feature>
<feature type="repeat" description="ANK 2">
    <location>
        <begin position="105"/>
        <end position="135"/>
    </location>
</feature>
<feature type="repeat" description="ANK 3">
    <location>
        <begin position="139"/>
        <end position="168"/>
    </location>
</feature>
<feature type="modified residue" description="N-acetylserine" evidence="2">
    <location>
        <position position="2"/>
    </location>
</feature>
<feature type="modified residue" description="Phosphoserine" evidence="2">
    <location>
        <position position="202"/>
    </location>
</feature>
<feature type="modified residue" description="Phosphoserine" evidence="2">
    <location>
        <position position="213"/>
    </location>
</feature>
<reference key="1">
    <citation type="submission" date="2002-06" db="EMBL/GenBank/DDBJ databases">
        <authorList>
            <person name="Guo J.H."/>
        </authorList>
    </citation>
    <scope>NUCLEOTIDE SEQUENCE [MRNA]</scope>
    <source>
        <tissue>Brain</tissue>
    </source>
</reference>
<reference key="2">
    <citation type="submission" date="2006-01" db="EMBL/GenBank/DDBJ databases">
        <authorList>
            <consortium name="NIH - Mammalian Gene Collection (MGC) project"/>
        </authorList>
    </citation>
    <scope>NUCLEOTIDE SEQUENCE [LARGE SCALE MRNA]</scope>
    <source>
        <strain>Hereford</strain>
        <tissue>Testis</tissue>
    </source>
</reference>
<gene>
    <name type="primary">OSTF1</name>
</gene>
<dbReference type="EMBL" id="AF523267">
    <property type="protein sequence ID" value="AAM82160.1"/>
    <property type="molecule type" value="mRNA"/>
</dbReference>
<dbReference type="EMBL" id="BC112669">
    <property type="protein sequence ID" value="AAI12670.1"/>
    <property type="molecule type" value="mRNA"/>
</dbReference>
<dbReference type="RefSeq" id="NP_776834.1">
    <property type="nucleotide sequence ID" value="NM_174409.2"/>
</dbReference>
<dbReference type="SMR" id="Q8MJ50"/>
<dbReference type="FunCoup" id="Q8MJ50">
    <property type="interactions" value="1435"/>
</dbReference>
<dbReference type="STRING" id="9913.ENSBTAP00000003560"/>
<dbReference type="PaxDb" id="9913-ENSBTAP00000003560"/>
<dbReference type="PeptideAtlas" id="Q8MJ50"/>
<dbReference type="Ensembl" id="ENSBTAT00000003560.6">
    <property type="protein sequence ID" value="ENSBTAP00000003560.4"/>
    <property type="gene ID" value="ENSBTAG00000002746.6"/>
</dbReference>
<dbReference type="GeneID" id="281961"/>
<dbReference type="KEGG" id="bta:281961"/>
<dbReference type="CTD" id="26578"/>
<dbReference type="VEuPathDB" id="HostDB:ENSBTAG00000002746"/>
<dbReference type="VGNC" id="VGNC:32479">
    <property type="gene designation" value="OSTF1"/>
</dbReference>
<dbReference type="eggNOG" id="ENOG502QTZB">
    <property type="taxonomic scope" value="Eukaryota"/>
</dbReference>
<dbReference type="GeneTree" id="ENSGT00920000149159"/>
<dbReference type="HOGENOM" id="CLU_092255_0_0_1"/>
<dbReference type="InParanoid" id="Q8MJ50"/>
<dbReference type="OMA" id="NMSWLRE"/>
<dbReference type="OrthoDB" id="207120at2759"/>
<dbReference type="TreeFam" id="TF314534"/>
<dbReference type="Reactome" id="R-BTA-6798695">
    <property type="pathway name" value="Neutrophil degranulation"/>
</dbReference>
<dbReference type="Proteomes" id="UP000009136">
    <property type="component" value="Chromosome 8"/>
</dbReference>
<dbReference type="Bgee" id="ENSBTAG00000002746">
    <property type="expression patterns" value="Expressed in monocyte and 105 other cell types or tissues"/>
</dbReference>
<dbReference type="GO" id="GO:0005737">
    <property type="term" value="C:cytoplasm"/>
    <property type="evidence" value="ECO:0007669"/>
    <property type="project" value="UniProtKB-SubCell"/>
</dbReference>
<dbReference type="GO" id="GO:0007165">
    <property type="term" value="P:signal transduction"/>
    <property type="evidence" value="ECO:0000318"/>
    <property type="project" value="GO_Central"/>
</dbReference>
<dbReference type="CDD" id="cd11772">
    <property type="entry name" value="SH3_OSTF1"/>
    <property type="match status" value="1"/>
</dbReference>
<dbReference type="FunFam" id="1.25.40.20:FF:000066">
    <property type="entry name" value="Osteoclast-stimulating factor 1"/>
    <property type="match status" value="1"/>
</dbReference>
<dbReference type="FunFam" id="2.30.30.40:FF:000158">
    <property type="entry name" value="Osteoclast-stimulating factor 1"/>
    <property type="match status" value="1"/>
</dbReference>
<dbReference type="Gene3D" id="1.25.40.20">
    <property type="entry name" value="Ankyrin repeat-containing domain"/>
    <property type="match status" value="1"/>
</dbReference>
<dbReference type="Gene3D" id="2.30.30.40">
    <property type="entry name" value="SH3 Domains"/>
    <property type="match status" value="1"/>
</dbReference>
<dbReference type="InterPro" id="IPR002110">
    <property type="entry name" value="Ankyrin_rpt"/>
</dbReference>
<dbReference type="InterPro" id="IPR036770">
    <property type="entry name" value="Ankyrin_rpt-contain_sf"/>
</dbReference>
<dbReference type="InterPro" id="IPR036028">
    <property type="entry name" value="SH3-like_dom_sf"/>
</dbReference>
<dbReference type="InterPro" id="IPR001452">
    <property type="entry name" value="SH3_domain"/>
</dbReference>
<dbReference type="PANTHER" id="PTHR24155">
    <property type="entry name" value="OSTEOCLAST-STIMULATING FACTOR 1"/>
    <property type="match status" value="1"/>
</dbReference>
<dbReference type="PANTHER" id="PTHR24155:SF10">
    <property type="entry name" value="OSTEOCLAST-STIMULATING FACTOR 1"/>
    <property type="match status" value="1"/>
</dbReference>
<dbReference type="Pfam" id="PF00023">
    <property type="entry name" value="Ank"/>
    <property type="match status" value="1"/>
</dbReference>
<dbReference type="Pfam" id="PF12796">
    <property type="entry name" value="Ank_2"/>
    <property type="match status" value="1"/>
</dbReference>
<dbReference type="Pfam" id="PF00018">
    <property type="entry name" value="SH3_1"/>
    <property type="match status" value="1"/>
</dbReference>
<dbReference type="PRINTS" id="PR01415">
    <property type="entry name" value="ANKYRIN"/>
</dbReference>
<dbReference type="PRINTS" id="PR00499">
    <property type="entry name" value="P67PHOX"/>
</dbReference>
<dbReference type="PRINTS" id="PR00452">
    <property type="entry name" value="SH3DOMAIN"/>
</dbReference>
<dbReference type="SMART" id="SM00248">
    <property type="entry name" value="ANK"/>
    <property type="match status" value="3"/>
</dbReference>
<dbReference type="SMART" id="SM00326">
    <property type="entry name" value="SH3"/>
    <property type="match status" value="1"/>
</dbReference>
<dbReference type="SUPFAM" id="SSF48403">
    <property type="entry name" value="Ankyrin repeat"/>
    <property type="match status" value="1"/>
</dbReference>
<dbReference type="SUPFAM" id="SSF50044">
    <property type="entry name" value="SH3-domain"/>
    <property type="match status" value="1"/>
</dbReference>
<dbReference type="PROSITE" id="PS50297">
    <property type="entry name" value="ANK_REP_REGION"/>
    <property type="match status" value="1"/>
</dbReference>
<dbReference type="PROSITE" id="PS50088">
    <property type="entry name" value="ANK_REPEAT"/>
    <property type="match status" value="1"/>
</dbReference>
<dbReference type="PROSITE" id="PS50002">
    <property type="entry name" value="SH3"/>
    <property type="match status" value="1"/>
</dbReference>
<comment type="function">
    <text evidence="1">Induces bone resorption, acting probably through a signaling cascade which results in the secretion of factor(s) enhancing osteoclast formation and activity.</text>
</comment>
<comment type="subunit">
    <text evidence="1">Interacts with SRC and SMN1. Interacts with FASLG (By similarity).</text>
</comment>
<comment type="subcellular location">
    <subcellularLocation>
        <location evidence="1">Cytoplasm</location>
    </subcellularLocation>
</comment>
<comment type="domain">
    <text evidence="1">The SH3 domain mediates interaction with SMN1.</text>
</comment>
<sequence length="214" mass="23842">MSKPPPKPVKPGQVKVFRALYTFEPRTPDELYFEEGDIIYITDMSDTNWWKGTCKGRTGLIPSNYVAEQAESIDNPLHEAAKRGNLSWLRECLDNRVGVNGLDKAGSTALYWACHGGHRDIVEMLFTQPNIELNQQNKLGDTALHAAAWKGYADIVQLLLEKGARTDLRNNEKKLALDMATNAACASLLKKKQGTDAVRSLSNAEDYLDDEDSD</sequence>
<organism>
    <name type="scientific">Bos taurus</name>
    <name type="common">Bovine</name>
    <dbReference type="NCBI Taxonomy" id="9913"/>
    <lineage>
        <taxon>Eukaryota</taxon>
        <taxon>Metazoa</taxon>
        <taxon>Chordata</taxon>
        <taxon>Craniata</taxon>
        <taxon>Vertebrata</taxon>
        <taxon>Euteleostomi</taxon>
        <taxon>Mammalia</taxon>
        <taxon>Eutheria</taxon>
        <taxon>Laurasiatheria</taxon>
        <taxon>Artiodactyla</taxon>
        <taxon>Ruminantia</taxon>
        <taxon>Pecora</taxon>
        <taxon>Bovidae</taxon>
        <taxon>Bovinae</taxon>
        <taxon>Bos</taxon>
    </lineage>
</organism>
<evidence type="ECO:0000250" key="1"/>
<evidence type="ECO:0000250" key="2">
    <source>
        <dbReference type="UniProtKB" id="Q92882"/>
    </source>
</evidence>
<evidence type="ECO:0000255" key="3">
    <source>
        <dbReference type="PROSITE-ProRule" id="PRU00192"/>
    </source>
</evidence>
<keyword id="KW-0007">Acetylation</keyword>
<keyword id="KW-0040">ANK repeat</keyword>
<keyword id="KW-0963">Cytoplasm</keyword>
<keyword id="KW-0597">Phosphoprotein</keyword>
<keyword id="KW-1185">Reference proteome</keyword>
<keyword id="KW-0677">Repeat</keyword>
<keyword id="KW-0728">SH3 domain</keyword>